<comment type="function">
    <text>Orphan receptor. May regulate nociceptor function and/or development, including the sensation or modulation of pain.</text>
</comment>
<comment type="subcellular location">
    <subcellularLocation>
        <location>Cell membrane</location>
        <topology>Multi-pass membrane protein</topology>
    </subcellularLocation>
</comment>
<comment type="similarity">
    <text evidence="2">Belongs to the G-protein coupled receptor 1 family. Mas subfamily.</text>
</comment>
<keyword id="KW-1003">Cell membrane</keyword>
<keyword id="KW-0297">G-protein coupled receptor</keyword>
<keyword id="KW-0325">Glycoprotein</keyword>
<keyword id="KW-0472">Membrane</keyword>
<keyword id="KW-0675">Receptor</keyword>
<keyword id="KW-1185">Reference proteome</keyword>
<keyword id="KW-0807">Transducer</keyword>
<keyword id="KW-0812">Transmembrane</keyword>
<keyword id="KW-1133">Transmembrane helix</keyword>
<evidence type="ECO:0000255" key="1"/>
<evidence type="ECO:0000255" key="2">
    <source>
        <dbReference type="PROSITE-ProRule" id="PRU00521"/>
    </source>
</evidence>
<name>MRGRE_MOUSE</name>
<protein>
    <recommendedName>
        <fullName>Mas-related G-protein coupled receptor member E</fullName>
    </recommendedName>
    <alternativeName>
        <fullName>Evolutionary breakpoint transcript 3 protein</fullName>
    </alternativeName>
</protein>
<organism>
    <name type="scientific">Mus musculus</name>
    <name type="common">Mouse</name>
    <dbReference type="NCBI Taxonomy" id="10090"/>
    <lineage>
        <taxon>Eukaryota</taxon>
        <taxon>Metazoa</taxon>
        <taxon>Chordata</taxon>
        <taxon>Craniata</taxon>
        <taxon>Vertebrata</taxon>
        <taxon>Euteleostomi</taxon>
        <taxon>Mammalia</taxon>
        <taxon>Eutheria</taxon>
        <taxon>Euarchontoglires</taxon>
        <taxon>Glires</taxon>
        <taxon>Rodentia</taxon>
        <taxon>Myomorpha</taxon>
        <taxon>Muroidea</taxon>
        <taxon>Muridae</taxon>
        <taxon>Murinae</taxon>
        <taxon>Mus</taxon>
        <taxon>Mus</taxon>
    </lineage>
</organism>
<dbReference type="EMBL" id="AY042210">
    <property type="protein sequence ID" value="AAK91801.1"/>
    <property type="molecule type" value="Genomic_DNA"/>
</dbReference>
<dbReference type="EMBL" id="AJ320231">
    <property type="protein sequence ID" value="CAC86257.1"/>
    <property type="molecule type" value="mRNA"/>
</dbReference>
<dbReference type="EMBL" id="AK048528">
    <property type="protein sequence ID" value="BAC33361.1"/>
    <property type="molecule type" value="mRNA"/>
</dbReference>
<dbReference type="CCDS" id="CCDS22046.1"/>
<dbReference type="RefSeq" id="NP_780743.1">
    <property type="nucleotide sequence ID" value="NM_175534.3"/>
</dbReference>
<dbReference type="RefSeq" id="XP_036009019.1">
    <property type="nucleotide sequence ID" value="XM_036153126.1"/>
</dbReference>
<dbReference type="SMR" id="Q91ZB7"/>
<dbReference type="STRING" id="10090.ENSMUSP00000058000"/>
<dbReference type="GlyCosmos" id="Q91ZB7">
    <property type="glycosylation" value="2 sites, No reported glycans"/>
</dbReference>
<dbReference type="GlyGen" id="Q91ZB7">
    <property type="glycosylation" value="2 sites"/>
</dbReference>
<dbReference type="PhosphoSitePlus" id="Q91ZB7"/>
<dbReference type="PaxDb" id="10090-ENSMUSP00000058000"/>
<dbReference type="ProteomicsDB" id="290316"/>
<dbReference type="Antibodypedia" id="23328">
    <property type="antibodies" value="102 antibodies from 23 providers"/>
</dbReference>
<dbReference type="DNASU" id="244238"/>
<dbReference type="Ensembl" id="ENSMUST00000054048.10">
    <property type="protein sequence ID" value="ENSMUSP00000058000.9"/>
    <property type="gene ID" value="ENSMUSG00000048965.10"/>
</dbReference>
<dbReference type="GeneID" id="244238"/>
<dbReference type="KEGG" id="mmu:244238"/>
<dbReference type="UCSC" id="uc009kpz.2">
    <property type="organism name" value="mouse"/>
</dbReference>
<dbReference type="AGR" id="MGI:2441884"/>
<dbReference type="CTD" id="116534"/>
<dbReference type="MGI" id="MGI:2441884">
    <property type="gene designation" value="Mrgpre"/>
</dbReference>
<dbReference type="VEuPathDB" id="HostDB:ENSMUSG00000048965"/>
<dbReference type="eggNOG" id="ENOG502TKZN">
    <property type="taxonomic scope" value="Eukaryota"/>
</dbReference>
<dbReference type="GeneTree" id="ENSGT01030000234639"/>
<dbReference type="HOGENOM" id="CLU_009579_4_1_1"/>
<dbReference type="InParanoid" id="Q91ZB7"/>
<dbReference type="OMA" id="GCHMVAI"/>
<dbReference type="OrthoDB" id="9896011at2759"/>
<dbReference type="PhylomeDB" id="Q91ZB7"/>
<dbReference type="TreeFam" id="TF336336"/>
<dbReference type="BioGRID-ORCS" id="244238">
    <property type="hits" value="2 hits in 76 CRISPR screens"/>
</dbReference>
<dbReference type="ChiTaRS" id="Mrgpre">
    <property type="organism name" value="mouse"/>
</dbReference>
<dbReference type="PRO" id="PR:Q91ZB7"/>
<dbReference type="Proteomes" id="UP000000589">
    <property type="component" value="Chromosome 7"/>
</dbReference>
<dbReference type="RNAct" id="Q91ZB7">
    <property type="molecule type" value="protein"/>
</dbReference>
<dbReference type="Bgee" id="ENSMUSG00000048965">
    <property type="expression patterns" value="Expressed in lumbar dorsal root ganglion and 106 other cell types or tissues"/>
</dbReference>
<dbReference type="ExpressionAtlas" id="Q91ZB7">
    <property type="expression patterns" value="baseline and differential"/>
</dbReference>
<dbReference type="GO" id="GO:0005886">
    <property type="term" value="C:plasma membrane"/>
    <property type="evidence" value="ECO:0007669"/>
    <property type="project" value="UniProtKB-SubCell"/>
</dbReference>
<dbReference type="GO" id="GO:0004930">
    <property type="term" value="F:G protein-coupled receptor activity"/>
    <property type="evidence" value="ECO:0007669"/>
    <property type="project" value="UniProtKB-KW"/>
</dbReference>
<dbReference type="CDD" id="cd15112">
    <property type="entry name" value="7tmA_MrgprE"/>
    <property type="match status" value="1"/>
</dbReference>
<dbReference type="FunFam" id="1.20.1070.10:FF:000193">
    <property type="entry name" value="Mas-related G-protein coupled receptor member E"/>
    <property type="match status" value="1"/>
</dbReference>
<dbReference type="Gene3D" id="1.20.1070.10">
    <property type="entry name" value="Rhodopsin 7-helix transmembrane proteins"/>
    <property type="match status" value="1"/>
</dbReference>
<dbReference type="InterPro" id="IPR000276">
    <property type="entry name" value="GPCR_Rhodpsn"/>
</dbReference>
<dbReference type="InterPro" id="IPR017452">
    <property type="entry name" value="GPCR_Rhodpsn_7TM"/>
</dbReference>
<dbReference type="InterPro" id="IPR026230">
    <property type="entry name" value="MRGPCRE"/>
</dbReference>
<dbReference type="InterPro" id="IPR026234">
    <property type="entry name" value="MRGPCRFAMILY"/>
</dbReference>
<dbReference type="PANTHER" id="PTHR11334">
    <property type="entry name" value="MAS-RELATED G-PROTEIN COUPLED RECEPTOR"/>
    <property type="match status" value="1"/>
</dbReference>
<dbReference type="PANTHER" id="PTHR11334:SF26">
    <property type="entry name" value="MAS-RELATED G-PROTEIN COUPLED RECEPTOR MEMBER E"/>
    <property type="match status" value="1"/>
</dbReference>
<dbReference type="Pfam" id="PF00001">
    <property type="entry name" value="7tm_1"/>
    <property type="match status" value="1"/>
</dbReference>
<dbReference type="PRINTS" id="PR00237">
    <property type="entry name" value="GPCRRHODOPSN"/>
</dbReference>
<dbReference type="PRINTS" id="PR02111">
    <property type="entry name" value="MRGPCRE"/>
</dbReference>
<dbReference type="PRINTS" id="PR02108">
    <property type="entry name" value="MRGPCRFAMILY"/>
</dbReference>
<dbReference type="SUPFAM" id="SSF81321">
    <property type="entry name" value="Family A G protein-coupled receptor-like"/>
    <property type="match status" value="1"/>
</dbReference>
<dbReference type="PROSITE" id="PS50262">
    <property type="entry name" value="G_PROTEIN_RECEP_F1_2"/>
    <property type="match status" value="1"/>
</dbReference>
<accession>Q91ZB7</accession>
<accession>Q711I9</accession>
<sequence>MTSLSVHTDSPSTQGEMAFNLTILSLTELLSLGGLLGNGVALWLLNQNVYRNPFSIYLLDVACADLIFLCCHMVAIIPELLQDQLNFPEFVHISLTMLRFFCYIVGLSLLAAISTEQCLATLFPAWYLCRRPRYLTTCVCALIWVLCLLLDLLLSGACTQFFGAPSYHLCDMLWLVVAVLLAALCCTMCVTSLLLLLRVERGPERHQPRGFPTLVLLAVLLFLFCGLPFGIFWLSKNLSWHIPLYFYHFSFFMASVHSAAKPAIYFFLGSTPGQRFREPLRLVLQRALGDEAELGAGREASQGGLVDMTV</sequence>
<feature type="chain" id="PRO_0000069762" description="Mas-related G-protein coupled receptor member E">
    <location>
        <begin position="1"/>
        <end position="310"/>
    </location>
</feature>
<feature type="topological domain" description="Extracellular" evidence="1">
    <location>
        <begin position="1"/>
        <end position="22"/>
    </location>
</feature>
<feature type="transmembrane region" description="Helical; Name=1" evidence="1">
    <location>
        <begin position="23"/>
        <end position="43"/>
    </location>
</feature>
<feature type="topological domain" description="Cytoplasmic" evidence="1">
    <location>
        <begin position="44"/>
        <end position="60"/>
    </location>
</feature>
<feature type="transmembrane region" description="Helical; Name=2" evidence="1">
    <location>
        <begin position="61"/>
        <end position="81"/>
    </location>
</feature>
<feature type="topological domain" description="Extracellular" evidence="1">
    <location>
        <begin position="82"/>
        <end position="92"/>
    </location>
</feature>
<feature type="transmembrane region" description="Helical; Name=3" evidence="1">
    <location>
        <begin position="93"/>
        <end position="113"/>
    </location>
</feature>
<feature type="topological domain" description="Cytoplasmic" evidence="1">
    <location>
        <begin position="114"/>
        <end position="133"/>
    </location>
</feature>
<feature type="transmembrane region" description="Helical; Name=4" evidence="1">
    <location>
        <begin position="134"/>
        <end position="154"/>
    </location>
</feature>
<feature type="topological domain" description="Extracellular" evidence="1">
    <location>
        <begin position="155"/>
        <end position="174"/>
    </location>
</feature>
<feature type="transmembrane region" description="Helical; Name=5" evidence="1">
    <location>
        <begin position="175"/>
        <end position="195"/>
    </location>
</feature>
<feature type="topological domain" description="Cytoplasmic" evidence="1">
    <location>
        <begin position="196"/>
        <end position="213"/>
    </location>
</feature>
<feature type="transmembrane region" description="Helical; Name=6" evidence="1">
    <location>
        <begin position="214"/>
        <end position="234"/>
    </location>
</feature>
<feature type="topological domain" description="Extracellular" evidence="1">
    <location>
        <begin position="235"/>
        <end position="248"/>
    </location>
</feature>
<feature type="transmembrane region" description="Helical; Name=7" evidence="1">
    <location>
        <begin position="249"/>
        <end position="269"/>
    </location>
</feature>
<feature type="topological domain" description="Cytoplasmic" evidence="1">
    <location>
        <begin position="270"/>
        <end position="310"/>
    </location>
</feature>
<feature type="glycosylation site" description="N-linked (GlcNAc...) asparagine" evidence="1">
    <location>
        <position position="20"/>
    </location>
</feature>
<feature type="glycosylation site" description="N-linked (GlcNAc...) asparagine" evidence="1">
    <location>
        <position position="237"/>
    </location>
</feature>
<gene>
    <name type="primary">Mrgpre</name>
    <name type="synonym">Ebrt3</name>
    <name type="synonym">Mrge</name>
</gene>
<reference key="1">
    <citation type="journal article" date="2001" name="Cell">
        <title>A diverse family of GPCRs expressed in specific subsets of nociceptive sensory neurons.</title>
        <authorList>
            <person name="Dong X."/>
            <person name="Han S.-K."/>
            <person name="Zylka M.J."/>
            <person name="Simon M.I."/>
            <person name="Anderson D.J."/>
        </authorList>
    </citation>
    <scope>NUCLEOTIDE SEQUENCE</scope>
    <source>
        <strain>C57BL/6J</strain>
    </source>
</reference>
<reference key="2">
    <citation type="submission" date="2001-07" db="EMBL/GenBank/DDBJ databases">
        <title>An evolutionary breakpoint region borders the imprinted Beckwith-Wiedemann syndrome (BWS) region.</title>
        <authorList>
            <person name="Engemann S."/>
            <person name="Stroedicke M."/>
            <person name="Meguro M."/>
            <person name="Franck O."/>
            <person name="Kalscheuer V."/>
            <person name="Oshimura M."/>
            <person name="Walter J."/>
        </authorList>
    </citation>
    <scope>NUCLEOTIDE SEQUENCE</scope>
    <source>
        <strain>C57BL/6J</strain>
    </source>
</reference>
<reference key="3">
    <citation type="journal article" date="2005" name="Science">
        <title>The transcriptional landscape of the mammalian genome.</title>
        <authorList>
            <person name="Carninci P."/>
            <person name="Kasukawa T."/>
            <person name="Katayama S."/>
            <person name="Gough J."/>
            <person name="Frith M.C."/>
            <person name="Maeda N."/>
            <person name="Oyama R."/>
            <person name="Ravasi T."/>
            <person name="Lenhard B."/>
            <person name="Wells C."/>
            <person name="Kodzius R."/>
            <person name="Shimokawa K."/>
            <person name="Bajic V.B."/>
            <person name="Brenner S.E."/>
            <person name="Batalov S."/>
            <person name="Forrest A.R."/>
            <person name="Zavolan M."/>
            <person name="Davis M.J."/>
            <person name="Wilming L.G."/>
            <person name="Aidinis V."/>
            <person name="Allen J.E."/>
            <person name="Ambesi-Impiombato A."/>
            <person name="Apweiler R."/>
            <person name="Aturaliya R.N."/>
            <person name="Bailey T.L."/>
            <person name="Bansal M."/>
            <person name="Baxter L."/>
            <person name="Beisel K.W."/>
            <person name="Bersano T."/>
            <person name="Bono H."/>
            <person name="Chalk A.M."/>
            <person name="Chiu K.P."/>
            <person name="Choudhary V."/>
            <person name="Christoffels A."/>
            <person name="Clutterbuck D.R."/>
            <person name="Crowe M.L."/>
            <person name="Dalla E."/>
            <person name="Dalrymple B.P."/>
            <person name="de Bono B."/>
            <person name="Della Gatta G."/>
            <person name="di Bernardo D."/>
            <person name="Down T."/>
            <person name="Engstrom P."/>
            <person name="Fagiolini M."/>
            <person name="Faulkner G."/>
            <person name="Fletcher C.F."/>
            <person name="Fukushima T."/>
            <person name="Furuno M."/>
            <person name="Futaki S."/>
            <person name="Gariboldi M."/>
            <person name="Georgii-Hemming P."/>
            <person name="Gingeras T.R."/>
            <person name="Gojobori T."/>
            <person name="Green R.E."/>
            <person name="Gustincich S."/>
            <person name="Harbers M."/>
            <person name="Hayashi Y."/>
            <person name="Hensch T.K."/>
            <person name="Hirokawa N."/>
            <person name="Hill D."/>
            <person name="Huminiecki L."/>
            <person name="Iacono M."/>
            <person name="Ikeo K."/>
            <person name="Iwama A."/>
            <person name="Ishikawa T."/>
            <person name="Jakt M."/>
            <person name="Kanapin A."/>
            <person name="Katoh M."/>
            <person name="Kawasawa Y."/>
            <person name="Kelso J."/>
            <person name="Kitamura H."/>
            <person name="Kitano H."/>
            <person name="Kollias G."/>
            <person name="Krishnan S.P."/>
            <person name="Kruger A."/>
            <person name="Kummerfeld S.K."/>
            <person name="Kurochkin I.V."/>
            <person name="Lareau L.F."/>
            <person name="Lazarevic D."/>
            <person name="Lipovich L."/>
            <person name="Liu J."/>
            <person name="Liuni S."/>
            <person name="McWilliam S."/>
            <person name="Madan Babu M."/>
            <person name="Madera M."/>
            <person name="Marchionni L."/>
            <person name="Matsuda H."/>
            <person name="Matsuzawa S."/>
            <person name="Miki H."/>
            <person name="Mignone F."/>
            <person name="Miyake S."/>
            <person name="Morris K."/>
            <person name="Mottagui-Tabar S."/>
            <person name="Mulder N."/>
            <person name="Nakano N."/>
            <person name="Nakauchi H."/>
            <person name="Ng P."/>
            <person name="Nilsson R."/>
            <person name="Nishiguchi S."/>
            <person name="Nishikawa S."/>
            <person name="Nori F."/>
            <person name="Ohara O."/>
            <person name="Okazaki Y."/>
            <person name="Orlando V."/>
            <person name="Pang K.C."/>
            <person name="Pavan W.J."/>
            <person name="Pavesi G."/>
            <person name="Pesole G."/>
            <person name="Petrovsky N."/>
            <person name="Piazza S."/>
            <person name="Reed J."/>
            <person name="Reid J.F."/>
            <person name="Ring B.Z."/>
            <person name="Ringwald M."/>
            <person name="Rost B."/>
            <person name="Ruan Y."/>
            <person name="Salzberg S.L."/>
            <person name="Sandelin A."/>
            <person name="Schneider C."/>
            <person name="Schoenbach C."/>
            <person name="Sekiguchi K."/>
            <person name="Semple C.A."/>
            <person name="Seno S."/>
            <person name="Sessa L."/>
            <person name="Sheng Y."/>
            <person name="Shibata Y."/>
            <person name="Shimada H."/>
            <person name="Shimada K."/>
            <person name="Silva D."/>
            <person name="Sinclair B."/>
            <person name="Sperling S."/>
            <person name="Stupka E."/>
            <person name="Sugiura K."/>
            <person name="Sultana R."/>
            <person name="Takenaka Y."/>
            <person name="Taki K."/>
            <person name="Tammoja K."/>
            <person name="Tan S.L."/>
            <person name="Tang S."/>
            <person name="Taylor M.S."/>
            <person name="Tegner J."/>
            <person name="Teichmann S.A."/>
            <person name="Ueda H.R."/>
            <person name="van Nimwegen E."/>
            <person name="Verardo R."/>
            <person name="Wei C.L."/>
            <person name="Yagi K."/>
            <person name="Yamanishi H."/>
            <person name="Zabarovsky E."/>
            <person name="Zhu S."/>
            <person name="Zimmer A."/>
            <person name="Hide W."/>
            <person name="Bult C."/>
            <person name="Grimmond S.M."/>
            <person name="Teasdale R.D."/>
            <person name="Liu E.T."/>
            <person name="Brusic V."/>
            <person name="Quackenbush J."/>
            <person name="Wahlestedt C."/>
            <person name="Mattick J.S."/>
            <person name="Hume D.A."/>
            <person name="Kai C."/>
            <person name="Sasaki D."/>
            <person name="Tomaru Y."/>
            <person name="Fukuda S."/>
            <person name="Kanamori-Katayama M."/>
            <person name="Suzuki M."/>
            <person name="Aoki J."/>
            <person name="Arakawa T."/>
            <person name="Iida J."/>
            <person name="Imamura K."/>
            <person name="Itoh M."/>
            <person name="Kato T."/>
            <person name="Kawaji H."/>
            <person name="Kawagashira N."/>
            <person name="Kawashima T."/>
            <person name="Kojima M."/>
            <person name="Kondo S."/>
            <person name="Konno H."/>
            <person name="Nakano K."/>
            <person name="Ninomiya N."/>
            <person name="Nishio T."/>
            <person name="Okada M."/>
            <person name="Plessy C."/>
            <person name="Shibata K."/>
            <person name="Shiraki T."/>
            <person name="Suzuki S."/>
            <person name="Tagami M."/>
            <person name="Waki K."/>
            <person name="Watahiki A."/>
            <person name="Okamura-Oho Y."/>
            <person name="Suzuki H."/>
            <person name="Kawai J."/>
            <person name="Hayashizaki Y."/>
        </authorList>
    </citation>
    <scope>NUCLEOTIDE SEQUENCE [LARGE SCALE MRNA]</scope>
    <source>
        <strain>C57BL/6J</strain>
        <tissue>Head</tissue>
    </source>
</reference>
<proteinExistence type="evidence at transcript level"/>